<evidence type="ECO:0000250" key="1"/>
<evidence type="ECO:0000250" key="2">
    <source>
        <dbReference type="UniProtKB" id="P30936"/>
    </source>
</evidence>
<evidence type="ECO:0000255" key="3"/>
<evidence type="ECO:0000255" key="4">
    <source>
        <dbReference type="PROSITE-ProRule" id="PRU00521"/>
    </source>
</evidence>
<evidence type="ECO:0000256" key="5">
    <source>
        <dbReference type="SAM" id="MobiDB-lite"/>
    </source>
</evidence>
<evidence type="ECO:0000269" key="6">
    <source>
    </source>
</evidence>
<feature type="chain" id="PRO_0000070124" description="Somatostatin receptor type 3">
    <location>
        <begin position="1"/>
        <end position="418"/>
    </location>
</feature>
<feature type="topological domain" description="Extracellular" evidence="3">
    <location>
        <begin position="1"/>
        <end position="43"/>
    </location>
</feature>
<feature type="transmembrane region" description="Helical; Name=1" evidence="3">
    <location>
        <begin position="44"/>
        <end position="69"/>
    </location>
</feature>
<feature type="topological domain" description="Cytoplasmic" evidence="3">
    <location>
        <begin position="70"/>
        <end position="79"/>
    </location>
</feature>
<feature type="transmembrane region" description="Helical; Name=2" evidence="3">
    <location>
        <begin position="80"/>
        <end position="101"/>
    </location>
</feature>
<feature type="topological domain" description="Extracellular" evidence="3">
    <location>
        <begin position="102"/>
        <end position="116"/>
    </location>
</feature>
<feature type="transmembrane region" description="Helical; Name=3" evidence="3">
    <location>
        <begin position="117"/>
        <end position="138"/>
    </location>
</feature>
<feature type="topological domain" description="Cytoplasmic" evidence="3">
    <location>
        <begin position="139"/>
        <end position="161"/>
    </location>
</feature>
<feature type="transmembrane region" description="Helical; Name=4" evidence="3">
    <location>
        <begin position="162"/>
        <end position="181"/>
    </location>
</feature>
<feature type="topological domain" description="Extracellular" evidence="3">
    <location>
        <begin position="182"/>
        <end position="205"/>
    </location>
</feature>
<feature type="transmembrane region" description="Helical; Name=5" evidence="3">
    <location>
        <begin position="206"/>
        <end position="231"/>
    </location>
</feature>
<feature type="topological domain" description="Cytoplasmic" evidence="3">
    <location>
        <begin position="232"/>
        <end position="257"/>
    </location>
</feature>
<feature type="transmembrane region" description="Helical; Name=6" evidence="3">
    <location>
        <begin position="258"/>
        <end position="279"/>
    </location>
</feature>
<feature type="topological domain" description="Extracellular" evidence="3">
    <location>
        <begin position="280"/>
        <end position="293"/>
    </location>
</feature>
<feature type="transmembrane region" description="Helical; Name=7" evidence="3">
    <location>
        <begin position="294"/>
        <end position="316"/>
    </location>
</feature>
<feature type="topological domain" description="Cytoplasmic" evidence="3">
    <location>
        <begin position="317"/>
        <end position="418"/>
    </location>
</feature>
<feature type="region of interest" description="Disordered" evidence="5">
    <location>
        <begin position="1"/>
        <end position="21"/>
    </location>
</feature>
<feature type="region of interest" description="Disordered" evidence="5">
    <location>
        <begin position="335"/>
        <end position="418"/>
    </location>
</feature>
<feature type="compositionally biased region" description="Polar residues" evidence="5">
    <location>
        <begin position="7"/>
        <end position="20"/>
    </location>
</feature>
<feature type="compositionally biased region" description="Acidic residues" evidence="5">
    <location>
        <begin position="348"/>
        <end position="360"/>
    </location>
</feature>
<feature type="compositionally biased region" description="Basic and acidic residues" evidence="5">
    <location>
        <begin position="361"/>
        <end position="371"/>
    </location>
</feature>
<feature type="compositionally biased region" description="Polar residues" evidence="5">
    <location>
        <begin position="373"/>
        <end position="385"/>
    </location>
</feature>
<feature type="compositionally biased region" description="Polar residues" evidence="5">
    <location>
        <begin position="395"/>
        <end position="418"/>
    </location>
</feature>
<feature type="modified residue" description="Phosphoserine" evidence="2">
    <location>
        <position position="332"/>
    </location>
</feature>
<feature type="modified residue" description="Phosphoserine" evidence="2">
    <location>
        <position position="337"/>
    </location>
</feature>
<feature type="modified residue" description="Phosphothreonine" evidence="2">
    <location>
        <position position="348"/>
    </location>
</feature>
<feature type="glycosylation site" description="N-linked (GlcNAc...) asparagine" evidence="3">
    <location>
        <position position="17"/>
    </location>
</feature>
<feature type="glycosylation site" description="N-linked (GlcNAc...) asparagine" evidence="3">
    <location>
        <position position="30"/>
    </location>
</feature>
<feature type="disulfide bond" evidence="4">
    <location>
        <begin position="116"/>
        <end position="191"/>
    </location>
</feature>
<feature type="sequence variant" id="VAR_029219" description="In dbSNP:rs4988466.">
    <original>A</original>
    <variation>V</variation>
    <location>
        <position position="33"/>
    </location>
</feature>
<feature type="sequence variant" id="VAR_049440" description="In dbSNP:rs34943557.">
    <original>P</original>
    <variation>L</variation>
    <location>
        <position position="37"/>
    </location>
</feature>
<feature type="sequence variant" id="VAR_020072" description="In dbSNP:rs6413537.">
    <original>S</original>
    <variation>F</variation>
    <location>
        <position position="251"/>
    </location>
</feature>
<feature type="sequence variant" id="VAR_029220" description="In dbSNP:rs4988469.">
    <original>R</original>
    <variation>C</variation>
    <location>
        <position position="336"/>
    </location>
</feature>
<feature type="sequence variant" id="VAR_011853" description="In dbSNP:rs229568.">
    <original>S</original>
    <variation>T</variation>
    <location>
        <position position="411"/>
    </location>
</feature>
<feature type="sequence variant" id="VAR_029221" description="In dbSNP:rs4988471.">
    <original>R</original>
    <variation>H</variation>
    <location>
        <position position="414"/>
    </location>
</feature>
<protein>
    <recommendedName>
        <fullName>Somatostatin receptor type 3</fullName>
        <shortName>SS-3-R</shortName>
        <shortName>SS3-R</shortName>
        <shortName>SS3R</shortName>
        <shortName>SST3</shortName>
    </recommendedName>
    <alternativeName>
        <fullName>SSR-28</fullName>
    </alternativeName>
</protein>
<gene>
    <name type="primary">SSTR3</name>
</gene>
<organism>
    <name type="scientific">Homo sapiens</name>
    <name type="common">Human</name>
    <dbReference type="NCBI Taxonomy" id="9606"/>
    <lineage>
        <taxon>Eukaryota</taxon>
        <taxon>Metazoa</taxon>
        <taxon>Chordata</taxon>
        <taxon>Craniata</taxon>
        <taxon>Vertebrata</taxon>
        <taxon>Euteleostomi</taxon>
        <taxon>Mammalia</taxon>
        <taxon>Eutheria</taxon>
        <taxon>Euarchontoglires</taxon>
        <taxon>Primates</taxon>
        <taxon>Haplorrhini</taxon>
        <taxon>Catarrhini</taxon>
        <taxon>Hominidae</taxon>
        <taxon>Homo</taxon>
    </lineage>
</organism>
<sequence length="418" mass="45847">MDMLHPSSVSTTSEPENASSAWPPDATLGNVSAGPSPAGLAVSGVLIPLVYLVVCVVGLLGNSLVIYVVLRHTASPSVTNVYILNLALADELFMLGLPFLAAQNALSYWPFGSLMCRLVMAVDGINQFTSIFCLTVMSVDRYLAVVHPTRSARWRTAPVARTVSAAVWVASAVVVLPVVVFSGVPRGMSTCHMQWPEPAAAWRAGFIIYTAALGFFGPLLVICLCYLLIVVKVRSAGRRVWAPSCQRRRRSERRVTRMVVAVVALFVLCWMPFYVLNIVNVVCPLPEEPAFFGLYFLVVALPYANSCANPILYGFLSYRFKQGFRRVLLRPSRRVRSQEPTVGPPEKTEEEDEEEEDGEESREGGKGKEMNGRVSQITQPGTSGQERPPSRVASKEQQLLPQEASTGEKSSTMRISYL</sequence>
<name>SSR3_HUMAN</name>
<accession>P32745</accession>
<accession>A8K550</accession>
<accession>Q53ZR7</accession>
<reference key="1">
    <citation type="journal article" date="1992" name="Mol. Endocrinol.">
        <title>Somatostatin receptors, an expanding gene family: cloning and functional characterization of human SSTR3, a protein coupled to adenylyl cyclase.</title>
        <authorList>
            <person name="Yamada Y."/>
            <person name="Reisine T."/>
            <person name="Law S.F."/>
            <person name="Ihara Y."/>
            <person name="Kubota A."/>
            <person name="Kagimoto S."/>
            <person name="Seino M."/>
            <person name="Seino Y."/>
            <person name="Bell G.I."/>
            <person name="Seino S."/>
        </authorList>
    </citation>
    <scope>NUCLEOTIDE SEQUENCE [GENOMIC DNA]</scope>
    <scope>FUNCTION</scope>
    <scope>TISSUE SPECIFICITY</scope>
</reference>
<reference key="2">
    <citation type="journal article" date="1993" name="FEBS Lett.">
        <title>A human somatostatin receptor (SSTR3), located on chromosome 22, displays preferential affinity for somatostatin-14 like peptides.</title>
        <authorList>
            <person name="Corness J.D."/>
            <person name="Demchyshyn L.L."/>
            <person name="Seeman P."/>
            <person name="van Tol H.H.M."/>
            <person name="Srikant C.B."/>
            <person name="Kent G."/>
            <person name="Patel Y.C."/>
            <person name="Niznik H.B."/>
        </authorList>
    </citation>
    <scope>NUCLEOTIDE SEQUENCE [GENOMIC DNA]</scope>
</reference>
<reference key="3">
    <citation type="submission" date="2003-04" db="EMBL/GenBank/DDBJ databases">
        <title>The human somatostatin receptor subtype 3 contains an upstream exon in the 5'-untranslated region: functional promoter studies.</title>
        <authorList>
            <person name="Rasch A.C."/>
            <person name="Boehnke C."/>
            <person name="Petersenn S."/>
        </authorList>
    </citation>
    <scope>NUCLEOTIDE SEQUENCE [GENOMIC DNA]</scope>
</reference>
<reference key="4">
    <citation type="submission" date="2003-06" db="EMBL/GenBank/DDBJ databases">
        <title>cDNA clones of human proteins involved in signal transduction sequenced by the Guthrie cDNA resource center (www.cdna.org).</title>
        <authorList>
            <person name="Kopatz S.A."/>
            <person name="Aronstam R.S."/>
            <person name="Sharma S.V."/>
        </authorList>
    </citation>
    <scope>NUCLEOTIDE SEQUENCE [GENOMIC DNA]</scope>
</reference>
<reference key="5">
    <citation type="journal article" date="2004" name="Genome Biol.">
        <title>A genome annotation-driven approach to cloning the human ORFeome.</title>
        <authorList>
            <person name="Collins J.E."/>
            <person name="Wright C.L."/>
            <person name="Edwards C.A."/>
            <person name="Davis M.P."/>
            <person name="Grinham J.A."/>
            <person name="Cole C.G."/>
            <person name="Goward M.E."/>
            <person name="Aguado B."/>
            <person name="Mallya M."/>
            <person name="Mokrab Y."/>
            <person name="Huckle E.J."/>
            <person name="Beare D.M."/>
            <person name="Dunham I."/>
        </authorList>
    </citation>
    <scope>NUCLEOTIDE SEQUENCE [LARGE SCALE MRNA]</scope>
</reference>
<reference key="6">
    <citation type="journal article" date="2004" name="Nat. Genet.">
        <title>Complete sequencing and characterization of 21,243 full-length human cDNAs.</title>
        <authorList>
            <person name="Ota T."/>
            <person name="Suzuki Y."/>
            <person name="Nishikawa T."/>
            <person name="Otsuki T."/>
            <person name="Sugiyama T."/>
            <person name="Irie R."/>
            <person name="Wakamatsu A."/>
            <person name="Hayashi K."/>
            <person name="Sato H."/>
            <person name="Nagai K."/>
            <person name="Kimura K."/>
            <person name="Makita H."/>
            <person name="Sekine M."/>
            <person name="Obayashi M."/>
            <person name="Nishi T."/>
            <person name="Shibahara T."/>
            <person name="Tanaka T."/>
            <person name="Ishii S."/>
            <person name="Yamamoto J."/>
            <person name="Saito K."/>
            <person name="Kawai Y."/>
            <person name="Isono Y."/>
            <person name="Nakamura Y."/>
            <person name="Nagahari K."/>
            <person name="Murakami K."/>
            <person name="Yasuda T."/>
            <person name="Iwayanagi T."/>
            <person name="Wagatsuma M."/>
            <person name="Shiratori A."/>
            <person name="Sudo H."/>
            <person name="Hosoiri T."/>
            <person name="Kaku Y."/>
            <person name="Kodaira H."/>
            <person name="Kondo H."/>
            <person name="Sugawara M."/>
            <person name="Takahashi M."/>
            <person name="Kanda K."/>
            <person name="Yokoi T."/>
            <person name="Furuya T."/>
            <person name="Kikkawa E."/>
            <person name="Omura Y."/>
            <person name="Abe K."/>
            <person name="Kamihara K."/>
            <person name="Katsuta N."/>
            <person name="Sato K."/>
            <person name="Tanikawa M."/>
            <person name="Yamazaki M."/>
            <person name="Ninomiya K."/>
            <person name="Ishibashi T."/>
            <person name="Yamashita H."/>
            <person name="Murakawa K."/>
            <person name="Fujimori K."/>
            <person name="Tanai H."/>
            <person name="Kimata M."/>
            <person name="Watanabe M."/>
            <person name="Hiraoka S."/>
            <person name="Chiba Y."/>
            <person name="Ishida S."/>
            <person name="Ono Y."/>
            <person name="Takiguchi S."/>
            <person name="Watanabe S."/>
            <person name="Yosida M."/>
            <person name="Hotuta T."/>
            <person name="Kusano J."/>
            <person name="Kanehori K."/>
            <person name="Takahashi-Fujii A."/>
            <person name="Hara H."/>
            <person name="Tanase T.-O."/>
            <person name="Nomura Y."/>
            <person name="Togiya S."/>
            <person name="Komai F."/>
            <person name="Hara R."/>
            <person name="Takeuchi K."/>
            <person name="Arita M."/>
            <person name="Imose N."/>
            <person name="Musashino K."/>
            <person name="Yuuki H."/>
            <person name="Oshima A."/>
            <person name="Sasaki N."/>
            <person name="Aotsuka S."/>
            <person name="Yoshikawa Y."/>
            <person name="Matsunawa H."/>
            <person name="Ichihara T."/>
            <person name="Shiohata N."/>
            <person name="Sano S."/>
            <person name="Moriya S."/>
            <person name="Momiyama H."/>
            <person name="Satoh N."/>
            <person name="Takami S."/>
            <person name="Terashima Y."/>
            <person name="Suzuki O."/>
            <person name="Nakagawa S."/>
            <person name="Senoh A."/>
            <person name="Mizoguchi H."/>
            <person name="Goto Y."/>
            <person name="Shimizu F."/>
            <person name="Wakebe H."/>
            <person name="Hishigaki H."/>
            <person name="Watanabe T."/>
            <person name="Sugiyama A."/>
            <person name="Takemoto M."/>
            <person name="Kawakami B."/>
            <person name="Yamazaki M."/>
            <person name="Watanabe K."/>
            <person name="Kumagai A."/>
            <person name="Itakura S."/>
            <person name="Fukuzumi Y."/>
            <person name="Fujimori Y."/>
            <person name="Komiyama M."/>
            <person name="Tashiro H."/>
            <person name="Tanigami A."/>
            <person name="Fujiwara T."/>
            <person name="Ono T."/>
            <person name="Yamada K."/>
            <person name="Fujii Y."/>
            <person name="Ozaki K."/>
            <person name="Hirao M."/>
            <person name="Ohmori Y."/>
            <person name="Kawabata A."/>
            <person name="Hikiji T."/>
            <person name="Kobatake N."/>
            <person name="Inagaki H."/>
            <person name="Ikema Y."/>
            <person name="Okamoto S."/>
            <person name="Okitani R."/>
            <person name="Kawakami T."/>
            <person name="Noguchi S."/>
            <person name="Itoh T."/>
            <person name="Shigeta K."/>
            <person name="Senba T."/>
            <person name="Matsumura K."/>
            <person name="Nakajima Y."/>
            <person name="Mizuno T."/>
            <person name="Morinaga M."/>
            <person name="Sasaki M."/>
            <person name="Togashi T."/>
            <person name="Oyama M."/>
            <person name="Hata H."/>
            <person name="Watanabe M."/>
            <person name="Komatsu T."/>
            <person name="Mizushima-Sugano J."/>
            <person name="Satoh T."/>
            <person name="Shirai Y."/>
            <person name="Takahashi Y."/>
            <person name="Nakagawa K."/>
            <person name="Okumura K."/>
            <person name="Nagase T."/>
            <person name="Nomura N."/>
            <person name="Kikuchi H."/>
            <person name="Masuho Y."/>
            <person name="Yamashita R."/>
            <person name="Nakai K."/>
            <person name="Yada T."/>
            <person name="Nakamura Y."/>
            <person name="Ohara O."/>
            <person name="Isogai T."/>
            <person name="Sugano S."/>
        </authorList>
    </citation>
    <scope>NUCLEOTIDE SEQUENCE [LARGE SCALE MRNA]</scope>
</reference>
<reference key="7">
    <citation type="journal article" date="1999" name="Nature">
        <title>The DNA sequence of human chromosome 22.</title>
        <authorList>
            <person name="Dunham I."/>
            <person name="Hunt A.R."/>
            <person name="Collins J.E."/>
            <person name="Bruskiewich R."/>
            <person name="Beare D.M."/>
            <person name="Clamp M."/>
            <person name="Smink L.J."/>
            <person name="Ainscough R."/>
            <person name="Almeida J.P."/>
            <person name="Babbage A.K."/>
            <person name="Bagguley C."/>
            <person name="Bailey J."/>
            <person name="Barlow K.F."/>
            <person name="Bates K.N."/>
            <person name="Beasley O.P."/>
            <person name="Bird C.P."/>
            <person name="Blakey S.E."/>
            <person name="Bridgeman A.M."/>
            <person name="Buck D."/>
            <person name="Burgess J."/>
            <person name="Burrill W.D."/>
            <person name="Burton J."/>
            <person name="Carder C."/>
            <person name="Carter N.P."/>
            <person name="Chen Y."/>
            <person name="Clark G."/>
            <person name="Clegg S.M."/>
            <person name="Cobley V.E."/>
            <person name="Cole C.G."/>
            <person name="Collier R.E."/>
            <person name="Connor R."/>
            <person name="Conroy D."/>
            <person name="Corby N.R."/>
            <person name="Coville G.J."/>
            <person name="Cox A.V."/>
            <person name="Davis J."/>
            <person name="Dawson E."/>
            <person name="Dhami P.D."/>
            <person name="Dockree C."/>
            <person name="Dodsworth S.J."/>
            <person name="Durbin R.M."/>
            <person name="Ellington A.G."/>
            <person name="Evans K.L."/>
            <person name="Fey J.M."/>
            <person name="Fleming K."/>
            <person name="French L."/>
            <person name="Garner A.A."/>
            <person name="Gilbert J.G.R."/>
            <person name="Goward M.E."/>
            <person name="Grafham D.V."/>
            <person name="Griffiths M.N.D."/>
            <person name="Hall C."/>
            <person name="Hall R.E."/>
            <person name="Hall-Tamlyn G."/>
            <person name="Heathcott R.W."/>
            <person name="Ho S."/>
            <person name="Holmes S."/>
            <person name="Hunt S.E."/>
            <person name="Jones M.C."/>
            <person name="Kershaw J."/>
            <person name="Kimberley A.M."/>
            <person name="King A."/>
            <person name="Laird G.K."/>
            <person name="Langford C.F."/>
            <person name="Leversha M.A."/>
            <person name="Lloyd C."/>
            <person name="Lloyd D.M."/>
            <person name="Martyn I.D."/>
            <person name="Mashreghi-Mohammadi M."/>
            <person name="Matthews L.H."/>
            <person name="Mccann O.T."/>
            <person name="Mcclay J."/>
            <person name="Mclaren S."/>
            <person name="McMurray A.A."/>
            <person name="Milne S.A."/>
            <person name="Mortimore B.J."/>
            <person name="Odell C.N."/>
            <person name="Pavitt R."/>
            <person name="Pearce A.V."/>
            <person name="Pearson D."/>
            <person name="Phillimore B.J.C.T."/>
            <person name="Phillips S.H."/>
            <person name="Plumb R.W."/>
            <person name="Ramsay H."/>
            <person name="Ramsey Y."/>
            <person name="Rogers L."/>
            <person name="Ross M.T."/>
            <person name="Scott C.E."/>
            <person name="Sehra H.K."/>
            <person name="Skuce C.D."/>
            <person name="Smalley S."/>
            <person name="Smith M.L."/>
            <person name="Soderlund C."/>
            <person name="Spragon L."/>
            <person name="Steward C.A."/>
            <person name="Sulston J.E."/>
            <person name="Swann R.M."/>
            <person name="Vaudin M."/>
            <person name="Wall M."/>
            <person name="Wallis J.M."/>
            <person name="Whiteley M.N."/>
            <person name="Willey D.L."/>
            <person name="Williams L."/>
            <person name="Williams S.A."/>
            <person name="Williamson H."/>
            <person name="Wilmer T.E."/>
            <person name="Wilming L."/>
            <person name="Wright C.L."/>
            <person name="Hubbard T."/>
            <person name="Bentley D.R."/>
            <person name="Beck S."/>
            <person name="Rogers J."/>
            <person name="Shimizu N."/>
            <person name="Minoshima S."/>
            <person name="Kawasaki K."/>
            <person name="Sasaki T."/>
            <person name="Asakawa S."/>
            <person name="Kudoh J."/>
            <person name="Shintani A."/>
            <person name="Shibuya K."/>
            <person name="Yoshizaki Y."/>
            <person name="Aoki N."/>
            <person name="Mitsuyama S."/>
            <person name="Roe B.A."/>
            <person name="Chen F."/>
            <person name="Chu L."/>
            <person name="Crabtree J."/>
            <person name="Deschamps S."/>
            <person name="Do A."/>
            <person name="Do T."/>
            <person name="Dorman A."/>
            <person name="Fang F."/>
            <person name="Fu Y."/>
            <person name="Hu P."/>
            <person name="Hua A."/>
            <person name="Kenton S."/>
            <person name="Lai H."/>
            <person name="Lao H.I."/>
            <person name="Lewis J."/>
            <person name="Lewis S."/>
            <person name="Lin S.-P."/>
            <person name="Loh P."/>
            <person name="Malaj E."/>
            <person name="Nguyen T."/>
            <person name="Pan H."/>
            <person name="Phan S."/>
            <person name="Qi S."/>
            <person name="Qian Y."/>
            <person name="Ray L."/>
            <person name="Ren Q."/>
            <person name="Shaull S."/>
            <person name="Sloan D."/>
            <person name="Song L."/>
            <person name="Wang Q."/>
            <person name="Wang Y."/>
            <person name="Wang Z."/>
            <person name="White J."/>
            <person name="Willingham D."/>
            <person name="Wu H."/>
            <person name="Yao Z."/>
            <person name="Zhan M."/>
            <person name="Zhang G."/>
            <person name="Chissoe S."/>
            <person name="Murray J."/>
            <person name="Miller N."/>
            <person name="Minx P."/>
            <person name="Fulton R."/>
            <person name="Johnson D."/>
            <person name="Bemis G."/>
            <person name="Bentley D."/>
            <person name="Bradshaw H."/>
            <person name="Bourne S."/>
            <person name="Cordes M."/>
            <person name="Du Z."/>
            <person name="Fulton L."/>
            <person name="Goela D."/>
            <person name="Graves T."/>
            <person name="Hawkins J."/>
            <person name="Hinds K."/>
            <person name="Kemp K."/>
            <person name="Latreille P."/>
            <person name="Layman D."/>
            <person name="Ozersky P."/>
            <person name="Rohlfing T."/>
            <person name="Scheet P."/>
            <person name="Walker C."/>
            <person name="Wamsley A."/>
            <person name="Wohldmann P."/>
            <person name="Pepin K."/>
            <person name="Nelson J."/>
            <person name="Korf I."/>
            <person name="Bedell J.A."/>
            <person name="Hillier L.W."/>
            <person name="Mardis E."/>
            <person name="Waterston R."/>
            <person name="Wilson R."/>
            <person name="Emanuel B.S."/>
            <person name="Shaikh T."/>
            <person name="Kurahashi H."/>
            <person name="Saitta S."/>
            <person name="Budarf M.L."/>
            <person name="McDermid H.E."/>
            <person name="Johnson A."/>
            <person name="Wong A.C.C."/>
            <person name="Morrow B.E."/>
            <person name="Edelmann L."/>
            <person name="Kim U.J."/>
            <person name="Shizuya H."/>
            <person name="Simon M.I."/>
            <person name="Dumanski J.P."/>
            <person name="Peyrard M."/>
            <person name="Kedra D."/>
            <person name="Seroussi E."/>
            <person name="Fransson I."/>
            <person name="Tapia I."/>
            <person name="Bruder C.E."/>
            <person name="O'Brien K.P."/>
            <person name="Wilkinson P."/>
            <person name="Bodenteich A."/>
            <person name="Hartman K."/>
            <person name="Hu X."/>
            <person name="Khan A.S."/>
            <person name="Lane L."/>
            <person name="Tilahun Y."/>
            <person name="Wright H."/>
        </authorList>
    </citation>
    <scope>NUCLEOTIDE SEQUENCE [LARGE SCALE GENOMIC DNA]</scope>
</reference>
<reference key="8">
    <citation type="journal article" date="2004" name="Genome Res.">
        <title>The status, quality, and expansion of the NIH full-length cDNA project: the Mammalian Gene Collection (MGC).</title>
        <authorList>
            <consortium name="The MGC Project Team"/>
        </authorList>
    </citation>
    <scope>NUCLEOTIDE SEQUENCE [LARGE SCALE MRNA]</scope>
</reference>
<proteinExistence type="evidence at protein level"/>
<comment type="function">
    <text evidence="6">Receptor for somatostatin-14 and -28. This receptor is coupled via pertussis toxin sensitive G proteins to inhibition of adenylyl cyclase.</text>
</comment>
<comment type="subunit">
    <text evidence="1">Homodimer and heterodimer with SSTR2. Heterodimerization with SSTR2 inactivates SSTR3 receptor function (By similarity).</text>
</comment>
<comment type="interaction">
    <interactant intactId="EBI-6266935">
        <id>P32745</id>
    </interactant>
    <interactant intactId="EBI-77613">
        <id>P05067</id>
        <label>APP</label>
    </interactant>
    <organismsDiffer>false</organismsDiffer>
    <experiments>3</experiments>
</comment>
<comment type="interaction">
    <interactant intactId="EBI-6266935">
        <id>P32745</id>
    </interactant>
    <interactant intactId="EBI-821405">
        <id>O75970</id>
        <label>MPDZ</label>
    </interactant>
    <organismsDiffer>false</organismsDiffer>
    <experiments>5</experiments>
</comment>
<comment type="interaction">
    <interactant intactId="EBI-6266935">
        <id>P32745</id>
    </interactant>
    <interactant intactId="EBI-6266898">
        <id>P30874</id>
        <label>SSTR2</label>
    </interactant>
    <organismsDiffer>false</organismsDiffer>
    <experiments>3</experiments>
</comment>
<comment type="interaction">
    <interactant intactId="EBI-6266935">
        <id>P32745</id>
    </interactant>
    <interactant intactId="EBI-7401093">
        <id>O55164</id>
        <label>Mpdz</label>
    </interactant>
    <organismsDiffer>true</organismsDiffer>
    <experiments>2</experiments>
</comment>
<comment type="subcellular location">
    <subcellularLocation>
        <location evidence="1">Cell membrane</location>
        <topology evidence="1">Multi-pass membrane protein</topology>
    </subcellularLocation>
    <text evidence="1">Internalized into endoplasmic vesicles upon somatostatin-stimulation.</text>
</comment>
<comment type="tissue specificity">
    <text evidence="6">Brain, pituitary and pancreas.</text>
</comment>
<comment type="PTM">
    <text evidence="1">Phosphorylated. Phosphorylation increases upon somatostatin binding (By similarity).</text>
</comment>
<comment type="similarity">
    <text evidence="4">Belongs to the G-protein coupled receptor 1 family.</text>
</comment>
<keyword id="KW-0002">3D-structure</keyword>
<keyword id="KW-1003">Cell membrane</keyword>
<keyword id="KW-1015">Disulfide bond</keyword>
<keyword id="KW-0297">G-protein coupled receptor</keyword>
<keyword id="KW-0325">Glycoprotein</keyword>
<keyword id="KW-0472">Membrane</keyword>
<keyword id="KW-0597">Phosphoprotein</keyword>
<keyword id="KW-1267">Proteomics identification</keyword>
<keyword id="KW-0675">Receptor</keyword>
<keyword id="KW-1185">Reference proteome</keyword>
<keyword id="KW-0807">Transducer</keyword>
<keyword id="KW-0812">Transmembrane</keyword>
<keyword id="KW-1133">Transmembrane helix</keyword>
<dbReference type="EMBL" id="M96738">
    <property type="protein sequence ID" value="AAA60592.1"/>
    <property type="molecule type" value="Genomic_DNA"/>
</dbReference>
<dbReference type="EMBL" id="AY277678">
    <property type="protein sequence ID" value="AAP32288.1"/>
    <property type="molecule type" value="Genomic_DNA"/>
</dbReference>
<dbReference type="EMBL" id="AY322541">
    <property type="protein sequence ID" value="AAP84354.1"/>
    <property type="molecule type" value="Genomic_DNA"/>
</dbReference>
<dbReference type="EMBL" id="CR456585">
    <property type="protein sequence ID" value="CAG30471.1"/>
    <property type="molecule type" value="mRNA"/>
</dbReference>
<dbReference type="EMBL" id="AK291165">
    <property type="protein sequence ID" value="BAF83854.1"/>
    <property type="molecule type" value="mRNA"/>
</dbReference>
<dbReference type="EMBL" id="Z82188">
    <property type="status" value="NOT_ANNOTATED_CDS"/>
    <property type="molecule type" value="Genomic_DNA"/>
</dbReference>
<dbReference type="EMBL" id="BC096829">
    <property type="protein sequence ID" value="AAH96829.1"/>
    <property type="molecule type" value="mRNA"/>
</dbReference>
<dbReference type="CCDS" id="CCDS13944.1"/>
<dbReference type="PIR" id="A46226">
    <property type="entry name" value="A46226"/>
</dbReference>
<dbReference type="RefSeq" id="NP_001042.1">
    <property type="nucleotide sequence ID" value="NM_001051.5"/>
</dbReference>
<dbReference type="RefSeq" id="NP_001265616.1">
    <property type="nucleotide sequence ID" value="NM_001278687.2"/>
</dbReference>
<dbReference type="RefSeq" id="XP_005261778.1">
    <property type="nucleotide sequence ID" value="XM_005261721.5"/>
</dbReference>
<dbReference type="RefSeq" id="XP_006724374.1">
    <property type="nucleotide sequence ID" value="XM_006724311.4"/>
</dbReference>
<dbReference type="RefSeq" id="XP_011528651.1">
    <property type="nucleotide sequence ID" value="XM_011530349.2"/>
</dbReference>
<dbReference type="RefSeq" id="XP_016884412.1">
    <property type="nucleotide sequence ID" value="XM_017028923.1"/>
</dbReference>
<dbReference type="RefSeq" id="XP_016884413.1">
    <property type="nucleotide sequence ID" value="XM_017028924.2"/>
</dbReference>
<dbReference type="RefSeq" id="XP_047297429.1">
    <property type="nucleotide sequence ID" value="XM_047441473.1"/>
</dbReference>
<dbReference type="RefSeq" id="XP_054181850.1">
    <property type="nucleotide sequence ID" value="XM_054325875.1"/>
</dbReference>
<dbReference type="RefSeq" id="XP_054181851.1">
    <property type="nucleotide sequence ID" value="XM_054325876.1"/>
</dbReference>
<dbReference type="RefSeq" id="XP_054181852.1">
    <property type="nucleotide sequence ID" value="XM_054325877.1"/>
</dbReference>
<dbReference type="PDB" id="8XIQ">
    <property type="method" value="EM"/>
    <property type="resolution" value="2.71 A"/>
    <property type="chains" value="A=1-369"/>
</dbReference>
<dbReference type="PDB" id="8XIR">
    <property type="method" value="EM"/>
    <property type="resolution" value="2.52 A"/>
    <property type="chains" value="A=1-418"/>
</dbReference>
<dbReference type="PDBsum" id="8XIQ"/>
<dbReference type="PDBsum" id="8XIR"/>
<dbReference type="EMDB" id="EMD-38387"/>
<dbReference type="EMDB" id="EMD-38388"/>
<dbReference type="SMR" id="P32745"/>
<dbReference type="BioGRID" id="112631">
    <property type="interactions" value="13"/>
</dbReference>
<dbReference type="CORUM" id="P32745"/>
<dbReference type="FunCoup" id="P32745">
    <property type="interactions" value="587"/>
</dbReference>
<dbReference type="IntAct" id="P32745">
    <property type="interactions" value="12"/>
</dbReference>
<dbReference type="MINT" id="P32745"/>
<dbReference type="STRING" id="9606.ENSP00000480971"/>
<dbReference type="BindingDB" id="P32745"/>
<dbReference type="ChEMBL" id="CHEMBL2028"/>
<dbReference type="DrugBank" id="DB15494">
    <property type="generic name" value="Edotreotide gallium Ga-68"/>
</dbReference>
<dbReference type="DrugBank" id="DB13985">
    <property type="generic name" value="Lutetium Lu 177 dotatate"/>
</dbReference>
<dbReference type="DrugBank" id="DB06663">
    <property type="generic name" value="Pasireotide"/>
</dbReference>
<dbReference type="DrugBank" id="DB09099">
    <property type="generic name" value="Somatostatin"/>
</dbReference>
<dbReference type="DrugCentral" id="P32745"/>
<dbReference type="GuidetoPHARMACOLOGY" id="357"/>
<dbReference type="TCDB" id="9.A.14.13.23">
    <property type="family name" value="the g-protein-coupled receptor (gpcr) family"/>
</dbReference>
<dbReference type="GlyCosmos" id="P32745">
    <property type="glycosylation" value="2 sites, No reported glycans"/>
</dbReference>
<dbReference type="GlyGen" id="P32745">
    <property type="glycosylation" value="2 sites"/>
</dbReference>
<dbReference type="iPTMnet" id="P32745"/>
<dbReference type="PhosphoSitePlus" id="P32745"/>
<dbReference type="BioMuta" id="SSTR3"/>
<dbReference type="DMDM" id="417815"/>
<dbReference type="MassIVE" id="P32745"/>
<dbReference type="PaxDb" id="9606-ENSP00000480971"/>
<dbReference type="PeptideAtlas" id="P32745"/>
<dbReference type="ProteomicsDB" id="54880"/>
<dbReference type="Antibodypedia" id="74216">
    <property type="antibodies" value="185 antibodies from 32 providers"/>
</dbReference>
<dbReference type="DNASU" id="6753"/>
<dbReference type="Ensembl" id="ENST00000610913.2">
    <property type="protein sequence ID" value="ENSP00000480971.1"/>
    <property type="gene ID" value="ENSG00000278195.2"/>
</dbReference>
<dbReference type="Ensembl" id="ENST00000617123.1">
    <property type="protein sequence ID" value="ENSP00000481325.1"/>
    <property type="gene ID" value="ENSG00000278195.2"/>
</dbReference>
<dbReference type="GeneID" id="6753"/>
<dbReference type="KEGG" id="hsa:6753"/>
<dbReference type="MANE-Select" id="ENST00000610913.2">
    <property type="protein sequence ID" value="ENSP00000480971.1"/>
    <property type="RefSeq nucleotide sequence ID" value="NM_001051.5"/>
    <property type="RefSeq protein sequence ID" value="NP_001042.1"/>
</dbReference>
<dbReference type="UCSC" id="uc021wos.3">
    <property type="organism name" value="human"/>
</dbReference>
<dbReference type="AGR" id="HGNC:11332"/>
<dbReference type="CTD" id="6753"/>
<dbReference type="DisGeNET" id="6753"/>
<dbReference type="GeneCards" id="SSTR3"/>
<dbReference type="HGNC" id="HGNC:11332">
    <property type="gene designation" value="SSTR3"/>
</dbReference>
<dbReference type="HPA" id="ENSG00000278195">
    <property type="expression patterns" value="Tissue enhanced (brain, lymphoid tissue, testis)"/>
</dbReference>
<dbReference type="MIM" id="182453">
    <property type="type" value="gene"/>
</dbReference>
<dbReference type="neXtProt" id="NX_P32745"/>
<dbReference type="OpenTargets" id="ENSG00000278195"/>
<dbReference type="PharmGKB" id="PA36156"/>
<dbReference type="VEuPathDB" id="HostDB:ENSG00000278195"/>
<dbReference type="eggNOG" id="KOG3656">
    <property type="taxonomic scope" value="Eukaryota"/>
</dbReference>
<dbReference type="GeneTree" id="ENSGT00940000162038"/>
<dbReference type="HOGENOM" id="CLU_009579_8_1_1"/>
<dbReference type="InParanoid" id="P32745"/>
<dbReference type="OMA" id="EVPACPP"/>
<dbReference type="OrthoDB" id="6076970at2759"/>
<dbReference type="PAN-GO" id="P32745">
    <property type="GO annotations" value="5 GO annotations based on evolutionary models"/>
</dbReference>
<dbReference type="PhylomeDB" id="P32745"/>
<dbReference type="TreeFam" id="TF315737"/>
<dbReference type="PathwayCommons" id="P32745"/>
<dbReference type="Reactome" id="R-HSA-375276">
    <property type="pathway name" value="Peptide ligand-binding receptors"/>
</dbReference>
<dbReference type="Reactome" id="R-HSA-418594">
    <property type="pathway name" value="G alpha (i) signalling events"/>
</dbReference>
<dbReference type="Reactome" id="R-HSA-5620922">
    <property type="pathway name" value="BBSome-mediated cargo-targeting to cilium"/>
</dbReference>
<dbReference type="SignaLink" id="P32745"/>
<dbReference type="SIGNOR" id="P32745"/>
<dbReference type="BioGRID-ORCS" id="6753">
    <property type="hits" value="12 hits in 1144 CRISPR screens"/>
</dbReference>
<dbReference type="GeneWiki" id="Somatostatin_receptor_3"/>
<dbReference type="GenomeRNAi" id="6753"/>
<dbReference type="Pharos" id="P32745">
    <property type="development level" value="Tclin"/>
</dbReference>
<dbReference type="PRO" id="PR:P32745"/>
<dbReference type="Proteomes" id="UP000005640">
    <property type="component" value="Chromosome 22"/>
</dbReference>
<dbReference type="RNAct" id="P32745">
    <property type="molecule type" value="protein"/>
</dbReference>
<dbReference type="Bgee" id="ENSG00000278195">
    <property type="expression patterns" value="Expressed in buccal mucosa cell and 76 other cell types or tissues"/>
</dbReference>
<dbReference type="GO" id="GO:0060170">
    <property type="term" value="C:ciliary membrane"/>
    <property type="evidence" value="ECO:0000304"/>
    <property type="project" value="Reactome"/>
</dbReference>
<dbReference type="GO" id="GO:0005929">
    <property type="term" value="C:cilium"/>
    <property type="evidence" value="ECO:0000314"/>
    <property type="project" value="MGI"/>
</dbReference>
<dbReference type="GO" id="GO:0043005">
    <property type="term" value="C:neuron projection"/>
    <property type="evidence" value="ECO:0000318"/>
    <property type="project" value="GO_Central"/>
</dbReference>
<dbReference type="GO" id="GO:0097730">
    <property type="term" value="C:non-motile cilium"/>
    <property type="evidence" value="ECO:0000250"/>
    <property type="project" value="BHF-UCL"/>
</dbReference>
<dbReference type="GO" id="GO:0005886">
    <property type="term" value="C:plasma membrane"/>
    <property type="evidence" value="ECO:0000318"/>
    <property type="project" value="GO_Central"/>
</dbReference>
<dbReference type="GO" id="GO:0004930">
    <property type="term" value="F:G protein-coupled receptor activity"/>
    <property type="evidence" value="ECO:0000318"/>
    <property type="project" value="GO_Central"/>
</dbReference>
<dbReference type="GO" id="GO:0042923">
    <property type="term" value="F:neuropeptide binding"/>
    <property type="evidence" value="ECO:0000318"/>
    <property type="project" value="GO_Central"/>
</dbReference>
<dbReference type="GO" id="GO:0005102">
    <property type="term" value="F:signaling receptor binding"/>
    <property type="evidence" value="ECO:0007669"/>
    <property type="project" value="Ensembl"/>
</dbReference>
<dbReference type="GO" id="GO:0004994">
    <property type="term" value="F:somatostatin receptor activity"/>
    <property type="evidence" value="ECO:0000304"/>
    <property type="project" value="ProtInc"/>
</dbReference>
<dbReference type="GO" id="GO:0007267">
    <property type="term" value="P:cell-cell signaling"/>
    <property type="evidence" value="ECO:0000304"/>
    <property type="project" value="ProtInc"/>
</dbReference>
<dbReference type="GO" id="GO:0007187">
    <property type="term" value="P:G protein-coupled receptor signaling pathway, coupled to cyclic nucleotide second messenger"/>
    <property type="evidence" value="ECO:0000304"/>
    <property type="project" value="ProtInc"/>
</dbReference>
<dbReference type="GO" id="GO:0008628">
    <property type="term" value="P:hormone-mediated apoptotic signaling pathway"/>
    <property type="evidence" value="ECO:0000304"/>
    <property type="project" value="ProtInc"/>
</dbReference>
<dbReference type="GO" id="GO:0008285">
    <property type="term" value="P:negative regulation of cell population proliferation"/>
    <property type="evidence" value="ECO:0000304"/>
    <property type="project" value="ProtInc"/>
</dbReference>
<dbReference type="GO" id="GO:0007218">
    <property type="term" value="P:neuropeptide signaling pathway"/>
    <property type="evidence" value="ECO:0000318"/>
    <property type="project" value="GO_Central"/>
</dbReference>
<dbReference type="FunFam" id="1.20.1070.10:FF:000039">
    <property type="entry name" value="somatostatin receptor type 2"/>
    <property type="match status" value="1"/>
</dbReference>
<dbReference type="Gene3D" id="1.20.1070.10">
    <property type="entry name" value="Rhodopsin 7-helix transmembrane proteins"/>
    <property type="match status" value="1"/>
</dbReference>
<dbReference type="InterPro" id="IPR000276">
    <property type="entry name" value="GPCR_Rhodpsn"/>
</dbReference>
<dbReference type="InterPro" id="IPR017452">
    <property type="entry name" value="GPCR_Rhodpsn_7TM"/>
</dbReference>
<dbReference type="InterPro" id="IPR000586">
    <property type="entry name" value="Somatstn_rcpt"/>
</dbReference>
<dbReference type="InterPro" id="IPR001856">
    <property type="entry name" value="Somatstn_rcpt_3"/>
</dbReference>
<dbReference type="PANTHER" id="PTHR24229">
    <property type="entry name" value="NEUROPEPTIDES RECEPTOR"/>
    <property type="match status" value="1"/>
</dbReference>
<dbReference type="PANTHER" id="PTHR24229:SF42">
    <property type="entry name" value="SOMATOSTATIN RECEPTOR TYPE 3"/>
    <property type="match status" value="1"/>
</dbReference>
<dbReference type="Pfam" id="PF00001">
    <property type="entry name" value="7tm_1"/>
    <property type="match status" value="1"/>
</dbReference>
<dbReference type="PRINTS" id="PR00237">
    <property type="entry name" value="GPCRRHODOPSN"/>
</dbReference>
<dbReference type="PRINTS" id="PR00246">
    <property type="entry name" value="SOMATOSTATNR"/>
</dbReference>
<dbReference type="PRINTS" id="PR00589">
    <property type="entry name" value="SOMATOSTTN3R"/>
</dbReference>
<dbReference type="SMART" id="SM01381">
    <property type="entry name" value="7TM_GPCR_Srsx"/>
    <property type="match status" value="1"/>
</dbReference>
<dbReference type="SUPFAM" id="SSF81321">
    <property type="entry name" value="Family A G protein-coupled receptor-like"/>
    <property type="match status" value="1"/>
</dbReference>
<dbReference type="PROSITE" id="PS00237">
    <property type="entry name" value="G_PROTEIN_RECEP_F1_1"/>
    <property type="match status" value="1"/>
</dbReference>
<dbReference type="PROSITE" id="PS50262">
    <property type="entry name" value="G_PROTEIN_RECEP_F1_2"/>
    <property type="match status" value="1"/>
</dbReference>